<name>TYPH_SINMW</name>
<organism>
    <name type="scientific">Sinorhizobium medicae (strain WSM419)</name>
    <name type="common">Ensifer medicae</name>
    <dbReference type="NCBI Taxonomy" id="366394"/>
    <lineage>
        <taxon>Bacteria</taxon>
        <taxon>Pseudomonadati</taxon>
        <taxon>Pseudomonadota</taxon>
        <taxon>Alphaproteobacteria</taxon>
        <taxon>Hyphomicrobiales</taxon>
        <taxon>Rhizobiaceae</taxon>
        <taxon>Sinorhizobium/Ensifer group</taxon>
        <taxon>Sinorhizobium</taxon>
    </lineage>
</organism>
<keyword id="KW-0328">Glycosyltransferase</keyword>
<keyword id="KW-0808">Transferase</keyword>
<protein>
    <recommendedName>
        <fullName evidence="1">Thymidine phosphorylase</fullName>
        <ecNumber evidence="1">2.4.2.4</ecNumber>
    </recommendedName>
    <alternativeName>
        <fullName evidence="1">TdRPase</fullName>
    </alternativeName>
</protein>
<gene>
    <name evidence="1" type="primary">deoA</name>
    <name type="ordered locus">Smed_3342</name>
</gene>
<sequence length="438" mass="45990">MAMLPQEVIRKKRDGGRLVPAEIAGFIEGLADGSISEGQAAAFAMAVWFSGMSRDECVALTLAMRDSGETLDWGEFGRPVVDKHSTGGVGDNVSLMLAPIVAACGPVVPMISGRGLGHTGGTLDKLESIPGYNIQPSPELFRRVVDEVGCAIIGQTANLAPADKRLYAIRDVTATVDSVPLITASILSKKLAAGLQSLVLDVKLGNGSFMTDPAETEILARSLVEVANGAGVRTSALITDMNEPLADAAGNALEVENCLAYLSGKKAGTRLDRVVMAFAAEMLAAAGVSAHKAEGEAMARRALESGEALERFGLMVHRLGGPADFVERPEAYLERAPAIVPVAAARDGYLAACETRELGMAVIALGGGRRRPDDRIDHRVGLAGLRPLRTKVEKGEPIAFVHGADRDQAEAVAKRVATLYAIAEEAPAQRPVIASRLV</sequence>
<reference key="1">
    <citation type="submission" date="2007-06" db="EMBL/GenBank/DDBJ databases">
        <title>Complete sequence of Sinorhizobium medicae WSM419 chromosome.</title>
        <authorList>
            <consortium name="US DOE Joint Genome Institute"/>
            <person name="Copeland A."/>
            <person name="Lucas S."/>
            <person name="Lapidus A."/>
            <person name="Barry K."/>
            <person name="Glavina del Rio T."/>
            <person name="Dalin E."/>
            <person name="Tice H."/>
            <person name="Pitluck S."/>
            <person name="Chain P."/>
            <person name="Malfatti S."/>
            <person name="Shin M."/>
            <person name="Vergez L."/>
            <person name="Schmutz J."/>
            <person name="Larimer F."/>
            <person name="Land M."/>
            <person name="Hauser L."/>
            <person name="Kyrpides N."/>
            <person name="Mikhailova N."/>
            <person name="Reeve W.G."/>
            <person name="Richardson P."/>
        </authorList>
    </citation>
    <scope>NUCLEOTIDE SEQUENCE [LARGE SCALE GENOMIC DNA]</scope>
    <source>
        <strain>WSM419</strain>
    </source>
</reference>
<evidence type="ECO:0000255" key="1">
    <source>
        <dbReference type="HAMAP-Rule" id="MF_01628"/>
    </source>
</evidence>
<proteinExistence type="inferred from homology"/>
<feature type="chain" id="PRO_1000069677" description="Thymidine phosphorylase">
    <location>
        <begin position="1"/>
        <end position="438"/>
    </location>
</feature>
<accession>A6UET3</accession>
<comment type="function">
    <text evidence="1">The enzymes which catalyze the reversible phosphorolysis of pyrimidine nucleosides are involved in the degradation of these compounds and in their utilization as carbon and energy sources, or in the rescue of pyrimidine bases for nucleotide synthesis.</text>
</comment>
<comment type="catalytic activity">
    <reaction evidence="1">
        <text>thymidine + phosphate = 2-deoxy-alpha-D-ribose 1-phosphate + thymine</text>
        <dbReference type="Rhea" id="RHEA:16037"/>
        <dbReference type="ChEBI" id="CHEBI:17748"/>
        <dbReference type="ChEBI" id="CHEBI:17821"/>
        <dbReference type="ChEBI" id="CHEBI:43474"/>
        <dbReference type="ChEBI" id="CHEBI:57259"/>
        <dbReference type="EC" id="2.4.2.4"/>
    </reaction>
</comment>
<comment type="pathway">
    <text evidence="1">Pyrimidine metabolism; dTMP biosynthesis via salvage pathway; dTMP from thymine: step 1/2.</text>
</comment>
<comment type="subunit">
    <text evidence="1">Homodimer.</text>
</comment>
<comment type="similarity">
    <text evidence="1">Belongs to the thymidine/pyrimidine-nucleoside phosphorylase family.</text>
</comment>
<dbReference type="EC" id="2.4.2.4" evidence="1"/>
<dbReference type="EMBL" id="CP000738">
    <property type="protein sequence ID" value="ABR62163.1"/>
    <property type="molecule type" value="Genomic_DNA"/>
</dbReference>
<dbReference type="RefSeq" id="WP_012067544.1">
    <property type="nucleotide sequence ID" value="NC_009636.1"/>
</dbReference>
<dbReference type="RefSeq" id="YP_001328998.1">
    <property type="nucleotide sequence ID" value="NC_009636.1"/>
</dbReference>
<dbReference type="SMR" id="A6UET3"/>
<dbReference type="STRING" id="366394.Smed_3342"/>
<dbReference type="GeneID" id="61610893"/>
<dbReference type="KEGG" id="smd:Smed_3342"/>
<dbReference type="PATRIC" id="fig|366394.8.peg.6588"/>
<dbReference type="eggNOG" id="COG0213">
    <property type="taxonomic scope" value="Bacteria"/>
</dbReference>
<dbReference type="HOGENOM" id="CLU_025040_0_1_5"/>
<dbReference type="OrthoDB" id="9763887at2"/>
<dbReference type="UniPathway" id="UPA00578">
    <property type="reaction ID" value="UER00638"/>
</dbReference>
<dbReference type="Proteomes" id="UP000001108">
    <property type="component" value="Chromosome"/>
</dbReference>
<dbReference type="GO" id="GO:0005829">
    <property type="term" value="C:cytosol"/>
    <property type="evidence" value="ECO:0007669"/>
    <property type="project" value="TreeGrafter"/>
</dbReference>
<dbReference type="GO" id="GO:0004645">
    <property type="term" value="F:1,4-alpha-oligoglucan phosphorylase activity"/>
    <property type="evidence" value="ECO:0007669"/>
    <property type="project" value="InterPro"/>
</dbReference>
<dbReference type="GO" id="GO:0009032">
    <property type="term" value="F:thymidine phosphorylase activity"/>
    <property type="evidence" value="ECO:0007669"/>
    <property type="project" value="UniProtKB-UniRule"/>
</dbReference>
<dbReference type="GO" id="GO:0006206">
    <property type="term" value="P:pyrimidine nucleobase metabolic process"/>
    <property type="evidence" value="ECO:0007669"/>
    <property type="project" value="InterPro"/>
</dbReference>
<dbReference type="GO" id="GO:0046104">
    <property type="term" value="P:thymidine metabolic process"/>
    <property type="evidence" value="ECO:0007669"/>
    <property type="project" value="UniProtKB-UniRule"/>
</dbReference>
<dbReference type="FunFam" id="3.40.1030.10:FF:000003">
    <property type="entry name" value="Pyrimidine-nucleoside phosphorylase"/>
    <property type="match status" value="1"/>
</dbReference>
<dbReference type="Gene3D" id="3.40.1030.10">
    <property type="entry name" value="Nucleoside phosphorylase/phosphoribosyltransferase catalytic domain"/>
    <property type="match status" value="1"/>
</dbReference>
<dbReference type="Gene3D" id="3.90.1170.30">
    <property type="entry name" value="Pyrimidine nucleoside phosphorylase-like, C-terminal domain"/>
    <property type="match status" value="1"/>
</dbReference>
<dbReference type="Gene3D" id="1.20.970.10">
    <property type="entry name" value="Transferase, Pyrimidine Nucleoside Phosphorylase, Chain C"/>
    <property type="match status" value="1"/>
</dbReference>
<dbReference type="HAMAP" id="MF_01628">
    <property type="entry name" value="Thymid_phosp"/>
    <property type="match status" value="1"/>
</dbReference>
<dbReference type="InterPro" id="IPR000312">
    <property type="entry name" value="Glycosyl_Trfase_fam3"/>
</dbReference>
<dbReference type="InterPro" id="IPR017459">
    <property type="entry name" value="Glycosyl_Trfase_fam3_N_dom"/>
</dbReference>
<dbReference type="InterPro" id="IPR036320">
    <property type="entry name" value="Glycosyl_Trfase_fam3_N_dom_sf"/>
</dbReference>
<dbReference type="InterPro" id="IPR035902">
    <property type="entry name" value="Nuc_phospho_transferase"/>
</dbReference>
<dbReference type="InterPro" id="IPR036566">
    <property type="entry name" value="PYNP-like_C_sf"/>
</dbReference>
<dbReference type="InterPro" id="IPR013102">
    <property type="entry name" value="PYNP_C"/>
</dbReference>
<dbReference type="InterPro" id="IPR018090">
    <property type="entry name" value="Pyrmidine_PPas_bac/euk"/>
</dbReference>
<dbReference type="InterPro" id="IPR017872">
    <property type="entry name" value="Pyrmidine_PPase_CS"/>
</dbReference>
<dbReference type="InterPro" id="IPR000053">
    <property type="entry name" value="Thymidine/pyrmidine_PPase"/>
</dbReference>
<dbReference type="InterPro" id="IPR013465">
    <property type="entry name" value="Thymidine_Pase"/>
</dbReference>
<dbReference type="NCBIfam" id="NF004490">
    <property type="entry name" value="PRK05820.1"/>
    <property type="match status" value="1"/>
</dbReference>
<dbReference type="NCBIfam" id="TIGR02643">
    <property type="entry name" value="T_phosphoryl"/>
    <property type="match status" value="1"/>
</dbReference>
<dbReference type="NCBIfam" id="TIGR02644">
    <property type="entry name" value="Y_phosphoryl"/>
    <property type="match status" value="1"/>
</dbReference>
<dbReference type="PANTHER" id="PTHR10515">
    <property type="entry name" value="THYMIDINE PHOSPHORYLASE"/>
    <property type="match status" value="1"/>
</dbReference>
<dbReference type="PANTHER" id="PTHR10515:SF0">
    <property type="entry name" value="THYMIDINE PHOSPHORYLASE"/>
    <property type="match status" value="1"/>
</dbReference>
<dbReference type="Pfam" id="PF02885">
    <property type="entry name" value="Glycos_trans_3N"/>
    <property type="match status" value="1"/>
</dbReference>
<dbReference type="Pfam" id="PF00591">
    <property type="entry name" value="Glycos_transf_3"/>
    <property type="match status" value="1"/>
</dbReference>
<dbReference type="Pfam" id="PF07831">
    <property type="entry name" value="PYNP_C"/>
    <property type="match status" value="1"/>
</dbReference>
<dbReference type="PIRSF" id="PIRSF000478">
    <property type="entry name" value="TP_PyNP"/>
    <property type="match status" value="1"/>
</dbReference>
<dbReference type="SMART" id="SM00941">
    <property type="entry name" value="PYNP_C"/>
    <property type="match status" value="1"/>
</dbReference>
<dbReference type="SUPFAM" id="SSF52418">
    <property type="entry name" value="Nucleoside phosphorylase/phosphoribosyltransferase catalytic domain"/>
    <property type="match status" value="1"/>
</dbReference>
<dbReference type="SUPFAM" id="SSF47648">
    <property type="entry name" value="Nucleoside phosphorylase/phosphoribosyltransferase N-terminal domain"/>
    <property type="match status" value="1"/>
</dbReference>
<dbReference type="SUPFAM" id="SSF54680">
    <property type="entry name" value="Pyrimidine nucleoside phosphorylase C-terminal domain"/>
    <property type="match status" value="1"/>
</dbReference>
<dbReference type="PROSITE" id="PS00647">
    <property type="entry name" value="THYMID_PHOSPHORYLASE"/>
    <property type="match status" value="1"/>
</dbReference>